<accession>P82744</accession>
<reference evidence="4" key="1">
    <citation type="journal article" date="1999" name="Nature">
        <title>Sequence and analysis of chromosome 2 of the plant Arabidopsis thaliana.</title>
        <authorList>
            <person name="Lin X."/>
            <person name="Kaul S."/>
            <person name="Rounsley S.D."/>
            <person name="Shea T.P."/>
            <person name="Benito M.-I."/>
            <person name="Town C.D."/>
            <person name="Fujii C.Y."/>
            <person name="Mason T.M."/>
            <person name="Bowman C.L."/>
            <person name="Barnstead M.E."/>
            <person name="Feldblyum T.V."/>
            <person name="Buell C.R."/>
            <person name="Ketchum K.A."/>
            <person name="Lee J.J."/>
            <person name="Ronning C.M."/>
            <person name="Koo H.L."/>
            <person name="Moffat K.S."/>
            <person name="Cronin L.A."/>
            <person name="Shen M."/>
            <person name="Pai G."/>
            <person name="Van Aken S."/>
            <person name="Umayam L."/>
            <person name="Tallon L.J."/>
            <person name="Gill J.E."/>
            <person name="Adams M.D."/>
            <person name="Carrera A.J."/>
            <person name="Creasy T.H."/>
            <person name="Goodman H.M."/>
            <person name="Somerville C.R."/>
            <person name="Copenhaver G.P."/>
            <person name="Preuss D."/>
            <person name="Nierman W.C."/>
            <person name="White O."/>
            <person name="Eisen J.A."/>
            <person name="Salzberg S.L."/>
            <person name="Fraser C.M."/>
            <person name="Venter J.C."/>
        </authorList>
    </citation>
    <scope>NUCLEOTIDE SEQUENCE [LARGE SCALE GENOMIC DNA]</scope>
    <source>
        <strain evidence="3">cv. Columbia</strain>
    </source>
</reference>
<reference key="2">
    <citation type="journal article" date="2017" name="Plant J.">
        <title>Araport11: a complete reannotation of the Arabidopsis thaliana reference genome.</title>
        <authorList>
            <person name="Cheng C.Y."/>
            <person name="Krishnakumar V."/>
            <person name="Chan A.P."/>
            <person name="Thibaud-Nissen F."/>
            <person name="Schobel S."/>
            <person name="Town C.D."/>
        </authorList>
    </citation>
    <scope>GENOME REANNOTATION</scope>
    <source>
        <strain>cv. Columbia</strain>
    </source>
</reference>
<reference evidence="4" key="3">
    <citation type="journal article" date="2001" name="Plant Mol. Biol.">
        <title>Two large Arabidopsis thaliana gene families are homologous to the Brassica gene superfamily that encodes pollen coat proteins and the male component of the self-incompatibility response.</title>
        <authorList>
            <person name="Vanoosthuyse V."/>
            <person name="Miege C."/>
            <person name="Dumas C."/>
            <person name="Cock J.M."/>
        </authorList>
    </citation>
    <scope>IDENTIFICATION</scope>
</reference>
<reference key="4">
    <citation type="journal article" date="2005" name="Plant Physiol.">
        <title>Genome organization of more than 300 defensin-like genes in Arabidopsis.</title>
        <authorList>
            <person name="Silverstein K.A.T."/>
            <person name="Graham M.A."/>
            <person name="Paape T.D."/>
            <person name="VandenBosch K.A."/>
        </authorList>
    </citation>
    <scope>GENE FAMILY</scope>
</reference>
<comment type="subcellular location">
    <subcellularLocation>
        <location evidence="1">Secreted</location>
    </subcellularLocation>
</comment>
<comment type="similarity">
    <text evidence="4">Belongs to the DEFL family.</text>
</comment>
<protein>
    <recommendedName>
        <fullName>Putative defensin-like protein 131</fullName>
    </recommendedName>
    <alternativeName>
        <fullName>Putative low-molecular-weight cysteine-rich protein 29</fullName>
        <shortName>Protein LCR29</shortName>
    </alternativeName>
</protein>
<sequence>MAKNRVLTIFYCTIYYCICFKYVLLGMVVEKTQGHICHDYLEGDHCDPKDCNLDCRDKWKGTGTCEPPTGTPLTRTCYCTYDC</sequence>
<organism evidence="4">
    <name type="scientific">Arabidopsis thaliana</name>
    <name type="common">Mouse-ear cress</name>
    <dbReference type="NCBI Taxonomy" id="3702"/>
    <lineage>
        <taxon>Eukaryota</taxon>
        <taxon>Viridiplantae</taxon>
        <taxon>Streptophyta</taxon>
        <taxon>Embryophyta</taxon>
        <taxon>Tracheophyta</taxon>
        <taxon>Spermatophyta</taxon>
        <taxon>Magnoliopsida</taxon>
        <taxon>eudicotyledons</taxon>
        <taxon>Gunneridae</taxon>
        <taxon>Pentapetalae</taxon>
        <taxon>rosids</taxon>
        <taxon>malvids</taxon>
        <taxon>Brassicales</taxon>
        <taxon>Brassicaceae</taxon>
        <taxon>Camelineae</taxon>
        <taxon>Arabidopsis</taxon>
    </lineage>
</organism>
<name>DF131_ARATH</name>
<proteinExistence type="inferred from homology"/>
<dbReference type="EMBL" id="AC007188">
    <property type="status" value="NOT_ANNOTATED_CDS"/>
    <property type="molecule type" value="Genomic_DNA"/>
</dbReference>
<dbReference type="EMBL" id="CP002685">
    <property type="protein sequence ID" value="AEC06147.1"/>
    <property type="molecule type" value="Genomic_DNA"/>
</dbReference>
<dbReference type="RefSeq" id="NP_001031345.1">
    <property type="nucleotide sequence ID" value="NM_001036268.1"/>
</dbReference>
<dbReference type="SMR" id="P82744"/>
<dbReference type="STRING" id="3702.P82744"/>
<dbReference type="PaxDb" id="3702-AT2G10535.1"/>
<dbReference type="EnsemblPlants" id="AT2G10535.1">
    <property type="protein sequence ID" value="AT2G10535.1"/>
    <property type="gene ID" value="AT2G10535"/>
</dbReference>
<dbReference type="GeneID" id="3768681"/>
<dbReference type="Gramene" id="AT2G10535.1">
    <property type="protein sequence ID" value="AT2G10535.1"/>
    <property type="gene ID" value="AT2G10535"/>
</dbReference>
<dbReference type="KEGG" id="ath:AT2G10535"/>
<dbReference type="Araport" id="AT2G10535"/>
<dbReference type="TAIR" id="AT2G10535">
    <property type="gene designation" value="LCR29"/>
</dbReference>
<dbReference type="HOGENOM" id="CLU_182511_2_0_1"/>
<dbReference type="InParanoid" id="P82744"/>
<dbReference type="OMA" id="HICHDYL"/>
<dbReference type="PhylomeDB" id="P82744"/>
<dbReference type="PRO" id="PR:P82744"/>
<dbReference type="Proteomes" id="UP000006548">
    <property type="component" value="Chromosome 2"/>
</dbReference>
<dbReference type="ExpressionAtlas" id="P82744">
    <property type="expression patterns" value="baseline and differential"/>
</dbReference>
<dbReference type="GO" id="GO:0005576">
    <property type="term" value="C:extracellular region"/>
    <property type="evidence" value="ECO:0007669"/>
    <property type="project" value="UniProtKB-SubCell"/>
</dbReference>
<dbReference type="GO" id="GO:0050832">
    <property type="term" value="P:defense response to fungus"/>
    <property type="evidence" value="ECO:0007669"/>
    <property type="project" value="UniProtKB-KW"/>
</dbReference>
<dbReference type="GO" id="GO:0031640">
    <property type="term" value="P:killing of cells of another organism"/>
    <property type="evidence" value="ECO:0007669"/>
    <property type="project" value="UniProtKB-KW"/>
</dbReference>
<dbReference type="InterPro" id="IPR010851">
    <property type="entry name" value="DEFL"/>
</dbReference>
<dbReference type="PANTHER" id="PTHR33830:SF10">
    <property type="entry name" value="DEFENSIN-LIKE PROTEIN 122-RELATED"/>
    <property type="match status" value="1"/>
</dbReference>
<dbReference type="PANTHER" id="PTHR33830">
    <property type="entry name" value="DEFENSIN-LIKE PROTEIN 184-RELATED"/>
    <property type="match status" value="1"/>
</dbReference>
<dbReference type="Pfam" id="PF07333">
    <property type="entry name" value="SLR1-BP"/>
    <property type="match status" value="1"/>
</dbReference>
<evidence type="ECO:0000250" key="1"/>
<evidence type="ECO:0000255" key="2"/>
<evidence type="ECO:0000269" key="3">
    <source>
    </source>
</evidence>
<evidence type="ECO:0000305" key="4"/>
<keyword id="KW-0929">Antimicrobial</keyword>
<keyword id="KW-1015">Disulfide bond</keyword>
<keyword id="KW-0295">Fungicide</keyword>
<keyword id="KW-0611">Plant defense</keyword>
<keyword id="KW-1185">Reference proteome</keyword>
<keyword id="KW-0964">Secreted</keyword>
<keyword id="KW-0732">Signal</keyword>
<gene>
    <name type="primary">LCR29</name>
    <name type="ordered locus">At2g10535</name>
    <name type="ORF">T4D8</name>
</gene>
<feature type="signal peptide" evidence="2">
    <location>
        <begin position="1"/>
        <end position="34"/>
    </location>
</feature>
<feature type="chain" id="PRO_0000017268" description="Putative defensin-like protein 131">
    <location>
        <begin position="35"/>
        <end position="83"/>
    </location>
</feature>
<feature type="disulfide bond" evidence="1">
    <location>
        <begin position="37"/>
        <end position="83"/>
    </location>
</feature>
<feature type="disulfide bond" evidence="1">
    <location>
        <begin position="46"/>
        <end position="65"/>
    </location>
</feature>
<feature type="disulfide bond" evidence="1">
    <location>
        <begin position="51"/>
        <end position="77"/>
    </location>
</feature>
<feature type="disulfide bond" evidence="1">
    <location>
        <begin position="55"/>
        <end position="79"/>
    </location>
</feature>